<proteinExistence type="inferred from homology"/>
<evidence type="ECO:0000255" key="1">
    <source>
        <dbReference type="HAMAP-Rule" id="MF_00215"/>
    </source>
</evidence>
<comment type="catalytic activity">
    <reaction evidence="1">
        <text>(R)-pantothenate + ATP = (R)-4'-phosphopantothenate + ADP + H(+)</text>
        <dbReference type="Rhea" id="RHEA:16373"/>
        <dbReference type="ChEBI" id="CHEBI:10986"/>
        <dbReference type="ChEBI" id="CHEBI:15378"/>
        <dbReference type="ChEBI" id="CHEBI:29032"/>
        <dbReference type="ChEBI" id="CHEBI:30616"/>
        <dbReference type="ChEBI" id="CHEBI:456216"/>
        <dbReference type="EC" id="2.7.1.33"/>
    </reaction>
</comment>
<comment type="pathway">
    <text evidence="1">Cofactor biosynthesis; coenzyme A biosynthesis; CoA from (R)-pantothenate: step 1/5.</text>
</comment>
<comment type="subcellular location">
    <subcellularLocation>
        <location evidence="1">Cytoplasm</location>
    </subcellularLocation>
</comment>
<comment type="similarity">
    <text evidence="1">Belongs to the prokaryotic pantothenate kinase family.</text>
</comment>
<protein>
    <recommendedName>
        <fullName evidence="1">Pantothenate kinase</fullName>
        <ecNumber evidence="1">2.7.1.33</ecNumber>
    </recommendedName>
    <alternativeName>
        <fullName evidence="1">Pantothenic acid kinase</fullName>
    </alternativeName>
</protein>
<name>COAA_SHEPA</name>
<dbReference type="EC" id="2.7.1.33" evidence="1"/>
<dbReference type="EMBL" id="CP000851">
    <property type="protein sequence ID" value="ABV85498.1"/>
    <property type="molecule type" value="Genomic_DNA"/>
</dbReference>
<dbReference type="RefSeq" id="WP_012153444.1">
    <property type="nucleotide sequence ID" value="NC_009901.1"/>
</dbReference>
<dbReference type="SMR" id="A8GYW1"/>
<dbReference type="STRING" id="398579.Spea_0169"/>
<dbReference type="KEGG" id="spl:Spea_0169"/>
<dbReference type="eggNOG" id="COG1072">
    <property type="taxonomic scope" value="Bacteria"/>
</dbReference>
<dbReference type="HOGENOM" id="CLU_053818_1_1_6"/>
<dbReference type="OrthoDB" id="1550976at2"/>
<dbReference type="UniPathway" id="UPA00241">
    <property type="reaction ID" value="UER00352"/>
</dbReference>
<dbReference type="Proteomes" id="UP000002608">
    <property type="component" value="Chromosome"/>
</dbReference>
<dbReference type="GO" id="GO:0005737">
    <property type="term" value="C:cytoplasm"/>
    <property type="evidence" value="ECO:0007669"/>
    <property type="project" value="UniProtKB-SubCell"/>
</dbReference>
<dbReference type="GO" id="GO:0005524">
    <property type="term" value="F:ATP binding"/>
    <property type="evidence" value="ECO:0007669"/>
    <property type="project" value="UniProtKB-UniRule"/>
</dbReference>
<dbReference type="GO" id="GO:0004594">
    <property type="term" value="F:pantothenate kinase activity"/>
    <property type="evidence" value="ECO:0007669"/>
    <property type="project" value="UniProtKB-UniRule"/>
</dbReference>
<dbReference type="GO" id="GO:0015937">
    <property type="term" value="P:coenzyme A biosynthetic process"/>
    <property type="evidence" value="ECO:0007669"/>
    <property type="project" value="UniProtKB-UniRule"/>
</dbReference>
<dbReference type="CDD" id="cd02025">
    <property type="entry name" value="PanK"/>
    <property type="match status" value="1"/>
</dbReference>
<dbReference type="FunFam" id="3.40.50.300:FF:000242">
    <property type="entry name" value="Pantothenate kinase"/>
    <property type="match status" value="1"/>
</dbReference>
<dbReference type="Gene3D" id="3.40.50.300">
    <property type="entry name" value="P-loop containing nucleotide triphosphate hydrolases"/>
    <property type="match status" value="1"/>
</dbReference>
<dbReference type="HAMAP" id="MF_00215">
    <property type="entry name" value="Pantothen_kinase_1"/>
    <property type="match status" value="1"/>
</dbReference>
<dbReference type="InterPro" id="IPR027417">
    <property type="entry name" value="P-loop_NTPase"/>
</dbReference>
<dbReference type="InterPro" id="IPR004566">
    <property type="entry name" value="PanK"/>
</dbReference>
<dbReference type="InterPro" id="IPR006083">
    <property type="entry name" value="PRK/URK"/>
</dbReference>
<dbReference type="NCBIfam" id="TIGR00554">
    <property type="entry name" value="panK_bact"/>
    <property type="match status" value="1"/>
</dbReference>
<dbReference type="PANTHER" id="PTHR10285">
    <property type="entry name" value="URIDINE KINASE"/>
    <property type="match status" value="1"/>
</dbReference>
<dbReference type="Pfam" id="PF00485">
    <property type="entry name" value="PRK"/>
    <property type="match status" value="1"/>
</dbReference>
<dbReference type="PIRSF" id="PIRSF000545">
    <property type="entry name" value="Pantothenate_kin"/>
    <property type="match status" value="1"/>
</dbReference>
<dbReference type="SUPFAM" id="SSF52540">
    <property type="entry name" value="P-loop containing nucleoside triphosphate hydrolases"/>
    <property type="match status" value="1"/>
</dbReference>
<sequence length="316" mass="35879">MSQPNQIHNALYLAFQRLQWSGLRESVPLTLSENDLADLRGINEKISLSEVTDIYLPLSRLLNLNVGAKQQRGLALNEFLGHVPPKRPYIISIAGSVAVGKSTTARILQALLSHWPEHPKVDLITTDGFLYPLSELKRRGLLQRKGFPESYDMKALVEFISAIKAGEPNVSAPIYSHITYDRIQDEQQWIRQPDILIIEGLNVLQTGQDSPVDTQRPFVSDFVDFSIYVDANESLLKKWYIDRFLQFRTGAFSSENSYFHHYSKLGDEEATATASNIWDTINGPNLTLNILPTRERAHLILQKGPDHMMDQVLLRK</sequence>
<keyword id="KW-0067">ATP-binding</keyword>
<keyword id="KW-0173">Coenzyme A biosynthesis</keyword>
<keyword id="KW-0963">Cytoplasm</keyword>
<keyword id="KW-0418">Kinase</keyword>
<keyword id="KW-0547">Nucleotide-binding</keyword>
<keyword id="KW-1185">Reference proteome</keyword>
<keyword id="KW-0808">Transferase</keyword>
<gene>
    <name evidence="1" type="primary">coaA</name>
    <name type="ordered locus">Spea_0169</name>
</gene>
<reference key="1">
    <citation type="submission" date="2007-10" db="EMBL/GenBank/DDBJ databases">
        <title>Complete sequence of Shewanella pealeana ATCC 700345.</title>
        <authorList>
            <consortium name="US DOE Joint Genome Institute"/>
            <person name="Copeland A."/>
            <person name="Lucas S."/>
            <person name="Lapidus A."/>
            <person name="Barry K."/>
            <person name="Glavina del Rio T."/>
            <person name="Dalin E."/>
            <person name="Tice H."/>
            <person name="Pitluck S."/>
            <person name="Chertkov O."/>
            <person name="Brettin T."/>
            <person name="Bruce D."/>
            <person name="Detter J.C."/>
            <person name="Han C."/>
            <person name="Schmutz J."/>
            <person name="Larimer F."/>
            <person name="Land M."/>
            <person name="Hauser L."/>
            <person name="Kyrpides N."/>
            <person name="Kim E."/>
            <person name="Zhao J.-S.Z."/>
            <person name="Manno D."/>
            <person name="Hawari J."/>
            <person name="Richardson P."/>
        </authorList>
    </citation>
    <scope>NUCLEOTIDE SEQUENCE [LARGE SCALE GENOMIC DNA]</scope>
    <source>
        <strain>ATCC 700345 / ANG-SQ1</strain>
    </source>
</reference>
<accession>A8GYW1</accession>
<feature type="chain" id="PRO_1000078062" description="Pantothenate kinase">
    <location>
        <begin position="1"/>
        <end position="316"/>
    </location>
</feature>
<feature type="binding site" evidence="1">
    <location>
        <begin position="95"/>
        <end position="102"/>
    </location>
    <ligand>
        <name>ATP</name>
        <dbReference type="ChEBI" id="CHEBI:30616"/>
    </ligand>
</feature>
<organism>
    <name type="scientific">Shewanella pealeana (strain ATCC 700345 / ANG-SQ1)</name>
    <dbReference type="NCBI Taxonomy" id="398579"/>
    <lineage>
        <taxon>Bacteria</taxon>
        <taxon>Pseudomonadati</taxon>
        <taxon>Pseudomonadota</taxon>
        <taxon>Gammaproteobacteria</taxon>
        <taxon>Alteromonadales</taxon>
        <taxon>Shewanellaceae</taxon>
        <taxon>Shewanella</taxon>
    </lineage>
</organism>